<feature type="chain" id="PRO_0000270791" description="Ras-related protein Rab-13">
    <location>
        <begin position="1"/>
        <end position="200"/>
    </location>
</feature>
<feature type="propeptide" id="PRO_0000370757" description="Removed in mature form" evidence="5">
    <location>
        <begin position="201"/>
        <end position="203"/>
    </location>
</feature>
<feature type="region of interest" description="Disordered" evidence="6">
    <location>
        <begin position="173"/>
        <end position="203"/>
    </location>
</feature>
<feature type="short sequence motif" description="Switch 1" evidence="3">
    <location>
        <begin position="31"/>
        <end position="45"/>
    </location>
</feature>
<feature type="short sequence motif" description="Switch 2" evidence="3">
    <location>
        <begin position="63"/>
        <end position="80"/>
    </location>
</feature>
<feature type="binding site" evidence="3">
    <location>
        <position position="17"/>
    </location>
    <ligand>
        <name>GTP</name>
        <dbReference type="ChEBI" id="CHEBI:37565"/>
    </ligand>
</feature>
<feature type="binding site" evidence="3">
    <location>
        <position position="18"/>
    </location>
    <ligand>
        <name>GTP</name>
        <dbReference type="ChEBI" id="CHEBI:37565"/>
    </ligand>
</feature>
<feature type="binding site" evidence="3">
    <location>
        <position position="20"/>
    </location>
    <ligand>
        <name>GTP</name>
        <dbReference type="ChEBI" id="CHEBI:37565"/>
    </ligand>
</feature>
<feature type="binding site" evidence="3">
    <location>
        <position position="21"/>
    </location>
    <ligand>
        <name>GTP</name>
        <dbReference type="ChEBI" id="CHEBI:37565"/>
    </ligand>
</feature>
<feature type="binding site" evidence="3">
    <location>
        <position position="22"/>
    </location>
    <ligand>
        <name>GTP</name>
        <dbReference type="ChEBI" id="CHEBI:37565"/>
    </ligand>
</feature>
<feature type="binding site" evidence="3">
    <location>
        <position position="22"/>
    </location>
    <ligand>
        <name>Mg(2+)</name>
        <dbReference type="ChEBI" id="CHEBI:18420"/>
    </ligand>
</feature>
<feature type="binding site" evidence="3">
    <location>
        <position position="23"/>
    </location>
    <ligand>
        <name>GTP</name>
        <dbReference type="ChEBI" id="CHEBI:37565"/>
    </ligand>
</feature>
<feature type="binding site" evidence="3">
    <location>
        <position position="40"/>
    </location>
    <ligand>
        <name>GTP</name>
        <dbReference type="ChEBI" id="CHEBI:37565"/>
    </ligand>
</feature>
<feature type="binding site" evidence="3">
    <location>
        <position position="40"/>
    </location>
    <ligand>
        <name>Mg(2+)</name>
        <dbReference type="ChEBI" id="CHEBI:18420"/>
    </ligand>
</feature>
<feature type="binding site" evidence="3">
    <location>
        <position position="63"/>
    </location>
    <ligand>
        <name>Mg(2+)</name>
        <dbReference type="ChEBI" id="CHEBI:18420"/>
    </ligand>
</feature>
<feature type="binding site" evidence="3">
    <location>
        <position position="66"/>
    </location>
    <ligand>
        <name>GTP</name>
        <dbReference type="ChEBI" id="CHEBI:37565"/>
    </ligand>
</feature>
<feature type="binding site" evidence="3">
    <location>
        <position position="121"/>
    </location>
    <ligand>
        <name>GTP</name>
        <dbReference type="ChEBI" id="CHEBI:37565"/>
    </ligand>
</feature>
<feature type="binding site" evidence="3">
    <location>
        <position position="122"/>
    </location>
    <ligand>
        <name>GTP</name>
        <dbReference type="ChEBI" id="CHEBI:37565"/>
    </ligand>
</feature>
<feature type="binding site" evidence="3">
    <location>
        <position position="124"/>
    </location>
    <ligand>
        <name>GTP</name>
        <dbReference type="ChEBI" id="CHEBI:37565"/>
    </ligand>
</feature>
<feature type="binding site" evidence="3">
    <location>
        <position position="152"/>
    </location>
    <ligand>
        <name>GTP</name>
        <dbReference type="ChEBI" id="CHEBI:37565"/>
    </ligand>
</feature>
<feature type="binding site" evidence="3">
    <location>
        <position position="153"/>
    </location>
    <ligand>
        <name>GTP</name>
        <dbReference type="ChEBI" id="CHEBI:37565"/>
    </ligand>
</feature>
<feature type="modified residue" description="Phosphoserine" evidence="2">
    <location>
        <position position="178"/>
    </location>
</feature>
<feature type="modified residue" description="Cysteine methyl ester" evidence="5">
    <location>
        <position position="200"/>
    </location>
</feature>
<feature type="lipid moiety-binding region" description="S-geranylgeranyl cysteine" evidence="2">
    <location>
        <position position="200"/>
    </location>
</feature>
<feature type="cross-link" description="Glycyl lysine isopeptide (Lys-Gly) (interchain with G-Cter in ubiquitin)" evidence="2">
    <location>
        <position position="46"/>
    </location>
</feature>
<feature type="cross-link" description="Glycyl lysine isopeptide (Lys-Gly) (interchain with G-Cter in ubiquitin)" evidence="2">
    <location>
        <position position="58"/>
    </location>
</feature>
<proteinExistence type="evidence at transcript level"/>
<keyword id="KW-0965">Cell junction</keyword>
<keyword id="KW-1003">Cell membrane</keyword>
<keyword id="KW-0966">Cell projection</keyword>
<keyword id="KW-0968">Cytoplasmic vesicle</keyword>
<keyword id="KW-0967">Endosome</keyword>
<keyword id="KW-0333">Golgi apparatus</keyword>
<keyword id="KW-0342">GTP-binding</keyword>
<keyword id="KW-0378">Hydrolase</keyword>
<keyword id="KW-1017">Isopeptide bond</keyword>
<keyword id="KW-0449">Lipoprotein</keyword>
<keyword id="KW-0460">Magnesium</keyword>
<keyword id="KW-0472">Membrane</keyword>
<keyword id="KW-0479">Metal-binding</keyword>
<keyword id="KW-0488">Methylation</keyword>
<keyword id="KW-0547">Nucleotide-binding</keyword>
<keyword id="KW-0597">Phosphoprotein</keyword>
<keyword id="KW-0636">Prenylation</keyword>
<keyword id="KW-0653">Protein transport</keyword>
<keyword id="KW-1185">Reference proteome</keyword>
<keyword id="KW-0796">Tight junction</keyword>
<keyword id="KW-0813">Transport</keyword>
<keyword id="KW-0832">Ubl conjugation</keyword>
<organism>
    <name type="scientific">Mesocricetus auratus</name>
    <name type="common">Golden hamster</name>
    <dbReference type="NCBI Taxonomy" id="10036"/>
    <lineage>
        <taxon>Eukaryota</taxon>
        <taxon>Metazoa</taxon>
        <taxon>Chordata</taxon>
        <taxon>Craniata</taxon>
        <taxon>Vertebrata</taxon>
        <taxon>Euteleostomi</taxon>
        <taxon>Mammalia</taxon>
        <taxon>Eutheria</taxon>
        <taxon>Euarchontoglires</taxon>
        <taxon>Glires</taxon>
        <taxon>Rodentia</taxon>
        <taxon>Myomorpha</taxon>
        <taxon>Muroidea</taxon>
        <taxon>Cricetidae</taxon>
        <taxon>Cricetinae</taxon>
        <taxon>Mesocricetus</taxon>
    </lineage>
</organism>
<comment type="function">
    <text evidence="2">The small GTPases Rab are key regulators of intracellular membrane trafficking, from the formation of transport vesicles to their fusion with membranes. Rabs cycle between an inactive GDP-bound form and an active GTP-bound form that is able to recruit to membranes different sets of downstream effectors directly responsible for vesicle formation, movement, tethering and fusion. RAB13 is involved in endocytic recycling and regulates the transport to the plasma membrane of transmembrane proteins like the tight junction protein OCLN/occludin. Thereby, it regulates the assembly and the activity of tight junctions. Moreover, it may also regulate tight junction assembly by activating the PKA signaling pathway and by reorganizing the actin cytoskeleton through the activation of the downstream effectors PRKACA and MICALL2 respectively. Through its role in tight junction assembly, may play a role in the establishment of Sertoli cell barrier. Plays also a role in angiogenesis through regulation of endothelial cells chemotaxis. Also involved in neurite outgrowth. Has also been proposed to play a role in post-Golgi membrane trafficking from the TGN to the recycling endosome. Finally, it has been involved in insulin-induced transport to the plasma membrane of the glucose transporter GLUT4 and therefore may play a role in glucose homeostasis (By similarity).</text>
</comment>
<comment type="catalytic activity">
    <reaction evidence="2">
        <text>GTP + H2O = GDP + phosphate + H(+)</text>
        <dbReference type="Rhea" id="RHEA:19669"/>
        <dbReference type="ChEBI" id="CHEBI:15377"/>
        <dbReference type="ChEBI" id="CHEBI:15378"/>
        <dbReference type="ChEBI" id="CHEBI:37565"/>
        <dbReference type="ChEBI" id="CHEBI:43474"/>
        <dbReference type="ChEBI" id="CHEBI:58189"/>
        <dbReference type="EC" id="3.6.5.2"/>
    </reaction>
    <physiologicalReaction direction="left-to-right" evidence="2">
        <dbReference type="Rhea" id="RHEA:19670"/>
    </physiologicalReaction>
</comment>
<comment type="cofactor">
    <cofactor evidence="3">
        <name>Mg(2+)</name>
        <dbReference type="ChEBI" id="CHEBI:18420"/>
    </cofactor>
</comment>
<comment type="activity regulation">
    <text evidence="1 2">Regulated by guanine nucleotide exchange factors (GEFs) including DENND1C, which promote the exchange of bound GDP for free GTP. Regulated by GTPase activating proteins (GAPs) which increase the GTP hydrolysis activity. Inhibited by GDP dissociation inhibitors (GDIs) (By similarity). Activated in response to insulin (By similarity).</text>
</comment>
<comment type="subunit">
    <text evidence="2">Interacts (GTP-bound form) with MICALL2; competes with RAB8A and is involved in tight junctions assembly. Interacts (GTP-bound form) with MICALL1. Interacts (GTP-bound form) with MICAL1, MICAL3, MICALCL, EHBP1 and EHBP1L1; ternary complexes of RAB8A, RAB13 and either MICAL1 or EHBP1L1 are possible. Interacts with PRKACA; downstream effector of RAB13 involved in tight junction assembly. Interacts with GRB2; may recruit RAB13 to the leading edge of migrating endothelial cells where it can activate RHOA. Interacts (isoprenylated form) with PDE6D; dissociates RAB13 from membranes. Interacts with BICDL2/BICDR2. Interacts with LEPROT and LEPROTL1 (By similarity).</text>
</comment>
<comment type="subcellular location">
    <subcellularLocation>
        <location evidence="2">Cell membrane</location>
        <topology evidence="7">Lipid-anchor</topology>
        <orientation evidence="7">Cytoplasmic side</orientation>
    </subcellularLocation>
    <subcellularLocation>
        <location evidence="2">Cytoplasmic vesicle membrane</location>
        <topology evidence="7">Lipid-anchor</topology>
        <orientation evidence="7">Cytoplasmic side</orientation>
    </subcellularLocation>
    <subcellularLocation>
        <location evidence="2">Cell junction</location>
        <location evidence="2">Tight junction</location>
    </subcellularLocation>
    <subcellularLocation>
        <location evidence="2">Golgi apparatus</location>
        <location evidence="2">trans-Golgi network membrane</location>
    </subcellularLocation>
    <subcellularLocation>
        <location evidence="2">Recycling endosome membrane</location>
    </subcellularLocation>
    <subcellularLocation>
        <location evidence="4">Cell projection</location>
        <location evidence="4">Lamellipodium</location>
    </subcellularLocation>
    <text evidence="2 4">Tight junctions or associated with vesicles scattered throughout the cytoplasm in cells lacking tight junctions (By similarity). Relocalizes to the leading edge of lamellipodia in migrating endothelial cells (By similarity).</text>
</comment>
<comment type="domain">
    <text evidence="3">Switch 1, switch 2 and the interswitch regions are characteristic of Rab GTPases and mediate the interactions with Rab downstream effectors. The switch regions undergo conformational changes upon nucleotide binding which drive interaction with specific sets of effector proteins, with most effectors only binding to GTP-bound Rab.</text>
</comment>
<comment type="PTM">
    <text evidence="2">Ubiquitinated via 'Lys-11'-linked ubiquitination on Lys-46 and Lys-58; impairing the recruitment of guanosine diphosphate (GDP) dissociation inhibitor 1/GDI1.</text>
</comment>
<comment type="similarity">
    <text evidence="7">Belongs to the small GTPase superfamily. Rab family.</text>
</comment>
<dbReference type="EC" id="3.6.5.2" evidence="4"/>
<dbReference type="EMBL" id="AB158369">
    <property type="protein sequence ID" value="BAD83700.1"/>
    <property type="molecule type" value="mRNA"/>
</dbReference>
<dbReference type="SMR" id="Q5KTJ6"/>
<dbReference type="STRING" id="10036.ENSMAUP00000016641"/>
<dbReference type="eggNOG" id="KOG0078">
    <property type="taxonomic scope" value="Eukaryota"/>
</dbReference>
<dbReference type="Proteomes" id="UP000189706">
    <property type="component" value="Unplaced"/>
</dbReference>
<dbReference type="GO" id="GO:0005923">
    <property type="term" value="C:bicellular tight junction"/>
    <property type="evidence" value="ECO:0000250"/>
    <property type="project" value="UniProtKB"/>
</dbReference>
<dbReference type="GO" id="GO:0031410">
    <property type="term" value="C:cytoplasmic vesicle"/>
    <property type="evidence" value="ECO:0000250"/>
    <property type="project" value="UniProtKB"/>
</dbReference>
<dbReference type="GO" id="GO:0030139">
    <property type="term" value="C:endocytic vesicle"/>
    <property type="evidence" value="ECO:0000250"/>
    <property type="project" value="UniProtKB"/>
</dbReference>
<dbReference type="GO" id="GO:0032593">
    <property type="term" value="C:insulin-responsive compartment"/>
    <property type="evidence" value="ECO:0000250"/>
    <property type="project" value="UniProtKB"/>
</dbReference>
<dbReference type="GO" id="GO:0030027">
    <property type="term" value="C:lamellipodium"/>
    <property type="evidence" value="ECO:0000250"/>
    <property type="project" value="UniProtKB"/>
</dbReference>
<dbReference type="GO" id="GO:0016328">
    <property type="term" value="C:lateral plasma membrane"/>
    <property type="evidence" value="ECO:0000250"/>
    <property type="project" value="UniProtKB"/>
</dbReference>
<dbReference type="GO" id="GO:0043005">
    <property type="term" value="C:neuron projection"/>
    <property type="evidence" value="ECO:0000250"/>
    <property type="project" value="UniProtKB"/>
</dbReference>
<dbReference type="GO" id="GO:0005886">
    <property type="term" value="C:plasma membrane"/>
    <property type="evidence" value="ECO:0000250"/>
    <property type="project" value="UniProtKB"/>
</dbReference>
<dbReference type="GO" id="GO:0055037">
    <property type="term" value="C:recycling endosome"/>
    <property type="evidence" value="ECO:0000250"/>
    <property type="project" value="UniProtKB"/>
</dbReference>
<dbReference type="GO" id="GO:0055038">
    <property type="term" value="C:recycling endosome membrane"/>
    <property type="evidence" value="ECO:0007669"/>
    <property type="project" value="UniProtKB-SubCell"/>
</dbReference>
<dbReference type="GO" id="GO:0005802">
    <property type="term" value="C:trans-Golgi network"/>
    <property type="evidence" value="ECO:0000250"/>
    <property type="project" value="UniProtKB"/>
</dbReference>
<dbReference type="GO" id="GO:0005525">
    <property type="term" value="F:GTP binding"/>
    <property type="evidence" value="ECO:0000250"/>
    <property type="project" value="UniProtKB"/>
</dbReference>
<dbReference type="GO" id="GO:0003924">
    <property type="term" value="F:GTPase activity"/>
    <property type="evidence" value="ECO:0007669"/>
    <property type="project" value="InterPro"/>
</dbReference>
<dbReference type="GO" id="GO:0070830">
    <property type="term" value="P:bicellular tight junction assembly"/>
    <property type="evidence" value="ECO:0000250"/>
    <property type="project" value="UniProtKB"/>
</dbReference>
<dbReference type="GO" id="GO:0032869">
    <property type="term" value="P:cellular response to insulin stimulus"/>
    <property type="evidence" value="ECO:0000250"/>
    <property type="project" value="UniProtKB"/>
</dbReference>
<dbReference type="GO" id="GO:0030866">
    <property type="term" value="P:cortical actin cytoskeleton organization"/>
    <property type="evidence" value="ECO:0000250"/>
    <property type="project" value="UniProtKB"/>
</dbReference>
<dbReference type="GO" id="GO:0032456">
    <property type="term" value="P:endocytic recycling"/>
    <property type="evidence" value="ECO:0000250"/>
    <property type="project" value="UniProtKB"/>
</dbReference>
<dbReference type="GO" id="GO:0016197">
    <property type="term" value="P:endosomal transport"/>
    <property type="evidence" value="ECO:0000250"/>
    <property type="project" value="UniProtKB"/>
</dbReference>
<dbReference type="GO" id="GO:0035767">
    <property type="term" value="P:endothelial cell chemotaxis"/>
    <property type="evidence" value="ECO:0000250"/>
    <property type="project" value="UniProtKB"/>
</dbReference>
<dbReference type="GO" id="GO:0097368">
    <property type="term" value="P:establishment of Sertoli cell barrier"/>
    <property type="evidence" value="ECO:0000250"/>
    <property type="project" value="UniProtKB"/>
</dbReference>
<dbReference type="GO" id="GO:0031175">
    <property type="term" value="P:neuron projection development"/>
    <property type="evidence" value="ECO:0000250"/>
    <property type="project" value="UniProtKB"/>
</dbReference>
<dbReference type="GO" id="GO:0010737">
    <property type="term" value="P:protein kinase A signaling"/>
    <property type="evidence" value="ECO:0000250"/>
    <property type="project" value="UniProtKB"/>
</dbReference>
<dbReference type="GO" id="GO:1902463">
    <property type="term" value="P:protein localization to cell leading edge"/>
    <property type="evidence" value="ECO:0000250"/>
    <property type="project" value="UniProtKB"/>
</dbReference>
<dbReference type="GO" id="GO:0072659">
    <property type="term" value="P:protein localization to plasma membrane"/>
    <property type="evidence" value="ECO:0000250"/>
    <property type="project" value="UniProtKB"/>
</dbReference>
<dbReference type="GO" id="GO:0015031">
    <property type="term" value="P:protein transport"/>
    <property type="evidence" value="ECO:0007669"/>
    <property type="project" value="UniProtKB-KW"/>
</dbReference>
<dbReference type="GO" id="GO:0044795">
    <property type="term" value="P:trans-Golgi network to recycling endosome transport"/>
    <property type="evidence" value="ECO:0000250"/>
    <property type="project" value="UniProtKB"/>
</dbReference>
<dbReference type="CDD" id="cd01867">
    <property type="entry name" value="Rab8_Rab10_Rab13_like"/>
    <property type="match status" value="1"/>
</dbReference>
<dbReference type="FunFam" id="3.40.50.300:FF:000363">
    <property type="entry name" value="Secretion related GTPase srgA"/>
    <property type="match status" value="1"/>
</dbReference>
<dbReference type="Gene3D" id="3.40.50.300">
    <property type="entry name" value="P-loop containing nucleotide triphosphate hydrolases"/>
    <property type="match status" value="1"/>
</dbReference>
<dbReference type="InterPro" id="IPR027417">
    <property type="entry name" value="P-loop_NTPase"/>
</dbReference>
<dbReference type="InterPro" id="IPR005225">
    <property type="entry name" value="Small_GTP-bd"/>
</dbReference>
<dbReference type="InterPro" id="IPR001806">
    <property type="entry name" value="Small_GTPase"/>
</dbReference>
<dbReference type="InterPro" id="IPR050305">
    <property type="entry name" value="Small_GTPase_Rab"/>
</dbReference>
<dbReference type="NCBIfam" id="TIGR00231">
    <property type="entry name" value="small_GTP"/>
    <property type="match status" value="1"/>
</dbReference>
<dbReference type="PANTHER" id="PTHR47980">
    <property type="entry name" value="LD44762P"/>
    <property type="match status" value="1"/>
</dbReference>
<dbReference type="Pfam" id="PF00071">
    <property type="entry name" value="Ras"/>
    <property type="match status" value="1"/>
</dbReference>
<dbReference type="PRINTS" id="PR00449">
    <property type="entry name" value="RASTRNSFRMNG"/>
</dbReference>
<dbReference type="SMART" id="SM00177">
    <property type="entry name" value="ARF"/>
    <property type="match status" value="1"/>
</dbReference>
<dbReference type="SMART" id="SM00175">
    <property type="entry name" value="RAB"/>
    <property type="match status" value="1"/>
</dbReference>
<dbReference type="SMART" id="SM00176">
    <property type="entry name" value="RAN"/>
    <property type="match status" value="1"/>
</dbReference>
<dbReference type="SMART" id="SM00173">
    <property type="entry name" value="RAS"/>
    <property type="match status" value="1"/>
</dbReference>
<dbReference type="SMART" id="SM00174">
    <property type="entry name" value="RHO"/>
    <property type="match status" value="1"/>
</dbReference>
<dbReference type="SUPFAM" id="SSF52540">
    <property type="entry name" value="P-loop containing nucleoside triphosphate hydrolases"/>
    <property type="match status" value="1"/>
</dbReference>
<dbReference type="PROSITE" id="PS51419">
    <property type="entry name" value="RAB"/>
    <property type="match status" value="1"/>
</dbReference>
<reference key="1">
    <citation type="submission" date="2003-12" db="EMBL/GenBank/DDBJ databases">
        <title>Hamster Rab13.</title>
        <authorList>
            <person name="Yamaguchi Y."/>
            <person name="Nishimura N."/>
            <person name="Shinahara W."/>
            <person name="Manabe S."/>
            <person name="Sasaki T."/>
        </authorList>
    </citation>
    <scope>NUCLEOTIDE SEQUENCE [MRNA]</scope>
</reference>
<name>RAB13_MESAU</name>
<gene>
    <name type="primary">RAB13</name>
</gene>
<evidence type="ECO:0000250" key="1">
    <source>
        <dbReference type="UniProtKB" id="P35286"/>
    </source>
</evidence>
<evidence type="ECO:0000250" key="2">
    <source>
        <dbReference type="UniProtKB" id="P51153"/>
    </source>
</evidence>
<evidence type="ECO:0000250" key="3">
    <source>
        <dbReference type="UniProtKB" id="P62820"/>
    </source>
</evidence>
<evidence type="ECO:0000250" key="4">
    <source>
        <dbReference type="UniProtKB" id="Q9DD03"/>
    </source>
</evidence>
<evidence type="ECO:0000255" key="5"/>
<evidence type="ECO:0000256" key="6">
    <source>
        <dbReference type="SAM" id="MobiDB-lite"/>
    </source>
</evidence>
<evidence type="ECO:0000305" key="7"/>
<accession>Q5KTJ6</accession>
<sequence length="203" mass="22851">MAKAYDHLFKLLLIGDSGVGKTCLIIRFAEDNFNNTYISTIGIDFKIRTVEIEGKRIKLQVWDTAGQERFKTITTAYYRGAMGIILVYDITDEKSFENIQNWMKSIKENASAGVERLLLGNKCDMEAKRKVLKEQADKLAREHGIRFFETSAKSSMNVDEAFNSLARDILLKSGGRRSGNHSKPSSTDLKPSDKKNTNKCSLG</sequence>
<protein>
    <recommendedName>
        <fullName>Ras-related protein Rab-13</fullName>
        <ecNumber evidence="4">3.6.5.2</ecNumber>
    </recommendedName>
</protein>